<organism>
    <name type="scientific">Francisella tularensis subsp. novicida (strain U112)</name>
    <dbReference type="NCBI Taxonomy" id="401614"/>
    <lineage>
        <taxon>Bacteria</taxon>
        <taxon>Pseudomonadati</taxon>
        <taxon>Pseudomonadota</taxon>
        <taxon>Gammaproteobacteria</taxon>
        <taxon>Thiotrichales</taxon>
        <taxon>Francisellaceae</taxon>
        <taxon>Francisella</taxon>
    </lineage>
</organism>
<gene>
    <name evidence="1" type="primary">uvrC</name>
    <name type="ordered locus">FTN_0680</name>
</gene>
<keyword id="KW-0963">Cytoplasm</keyword>
<keyword id="KW-0227">DNA damage</keyword>
<keyword id="KW-0228">DNA excision</keyword>
<keyword id="KW-0234">DNA repair</keyword>
<keyword id="KW-0267">Excision nuclease</keyword>
<keyword id="KW-0742">SOS response</keyword>
<sequence>MIVDNSKDFDLKSFLANLTTHSGVYRMLDKHGEIIYVGKAKNLKNRVNSYFSKGAKDSKTLMMVEQIARIEITITPSDYEAYLLENNLIKQHRPKYNILFKDDKSYPYLVISRDKFPRVSFYRGKSAYKKGQCFGPYVSISSVKNTLNTIQKIFPIRQCENSYYKSRVRPCLQYQIKRCLAPCVGLVSQQQYDEQLAILKKFLAGKFSTVLEEISAKMYQASEDMEYEKAQVYRDQLVVLRKLQQQQIVDIQEDKTFDVIGIYMQDSYASIALLQIQNGDVVADRHWSIDAKGQDKTSIMHAFLSHFYLGDEIRNIWPKNIILSKVEFADITDLMNSISQKIGQAINWIIAPAADNLKWLKLAEVNARQKLNIYTSSKSQYQKRLESLKEFLELEKDIKRIECFDISHFQGEATIASCVVYTDEGEDRKSHRRYNIKDIKAGDDYAAIYQAVSRRVSSGLEADNLPDVMIIDGGKGQIHQAEAVFREFGIQDKVQLVSLGKGVERISGKEKIYKGFDDTEYTLDEHNPGFLLLRQVRDSAHDHAIKGQRKKVSANRQSSIIEEIEGVGPKRRKALIMYFGGWQELSRASVDEIAKVKGISKKLAQEIWECFH</sequence>
<comment type="function">
    <text evidence="1">The UvrABC repair system catalyzes the recognition and processing of DNA lesions. UvrC both incises the 5' and 3' sides of the lesion. The N-terminal half is responsible for the 3' incision and the C-terminal half is responsible for the 5' incision.</text>
</comment>
<comment type="subunit">
    <text evidence="1">Interacts with UvrB in an incision complex.</text>
</comment>
<comment type="subcellular location">
    <subcellularLocation>
        <location evidence="1">Cytoplasm</location>
    </subcellularLocation>
</comment>
<comment type="similarity">
    <text evidence="1">Belongs to the UvrC family.</text>
</comment>
<feature type="chain" id="PRO_1000077789" description="UvrABC system protein C">
    <location>
        <begin position="1"/>
        <end position="612"/>
    </location>
</feature>
<feature type="domain" description="GIY-YIG" evidence="1">
    <location>
        <begin position="20"/>
        <end position="98"/>
    </location>
</feature>
<feature type="domain" description="UVR" evidence="1">
    <location>
        <begin position="208"/>
        <end position="243"/>
    </location>
</feature>
<dbReference type="EMBL" id="CP000439">
    <property type="protein sequence ID" value="ABK89572.1"/>
    <property type="molecule type" value="Genomic_DNA"/>
</dbReference>
<dbReference type="RefSeq" id="WP_003038798.1">
    <property type="nucleotide sequence ID" value="NZ_CP009633.1"/>
</dbReference>
<dbReference type="SMR" id="A0Q5Q7"/>
<dbReference type="KEGG" id="ftn:FTN_0680"/>
<dbReference type="KEGG" id="ftx:AW25_1344"/>
<dbReference type="BioCyc" id="FTUL401614:G1G75-708-MONOMER"/>
<dbReference type="Proteomes" id="UP000000762">
    <property type="component" value="Chromosome"/>
</dbReference>
<dbReference type="GO" id="GO:0005737">
    <property type="term" value="C:cytoplasm"/>
    <property type="evidence" value="ECO:0007669"/>
    <property type="project" value="UniProtKB-SubCell"/>
</dbReference>
<dbReference type="GO" id="GO:0009380">
    <property type="term" value="C:excinuclease repair complex"/>
    <property type="evidence" value="ECO:0007669"/>
    <property type="project" value="InterPro"/>
</dbReference>
<dbReference type="GO" id="GO:0003677">
    <property type="term" value="F:DNA binding"/>
    <property type="evidence" value="ECO:0007669"/>
    <property type="project" value="UniProtKB-UniRule"/>
</dbReference>
<dbReference type="GO" id="GO:0009381">
    <property type="term" value="F:excinuclease ABC activity"/>
    <property type="evidence" value="ECO:0007669"/>
    <property type="project" value="UniProtKB-UniRule"/>
</dbReference>
<dbReference type="GO" id="GO:0006289">
    <property type="term" value="P:nucleotide-excision repair"/>
    <property type="evidence" value="ECO:0007669"/>
    <property type="project" value="UniProtKB-UniRule"/>
</dbReference>
<dbReference type="GO" id="GO:0009432">
    <property type="term" value="P:SOS response"/>
    <property type="evidence" value="ECO:0007669"/>
    <property type="project" value="UniProtKB-UniRule"/>
</dbReference>
<dbReference type="CDD" id="cd10434">
    <property type="entry name" value="GIY-YIG_UvrC_Cho"/>
    <property type="match status" value="1"/>
</dbReference>
<dbReference type="FunFam" id="3.30.420.340:FF:000001">
    <property type="entry name" value="UvrABC system protein C"/>
    <property type="match status" value="1"/>
</dbReference>
<dbReference type="FunFam" id="3.40.1440.10:FF:000001">
    <property type="entry name" value="UvrABC system protein C"/>
    <property type="match status" value="1"/>
</dbReference>
<dbReference type="Gene3D" id="1.10.150.20">
    <property type="entry name" value="5' to 3' exonuclease, C-terminal subdomain"/>
    <property type="match status" value="1"/>
</dbReference>
<dbReference type="Gene3D" id="3.40.1440.10">
    <property type="entry name" value="GIY-YIG endonuclease"/>
    <property type="match status" value="1"/>
</dbReference>
<dbReference type="Gene3D" id="4.10.860.10">
    <property type="entry name" value="UVR domain"/>
    <property type="match status" value="1"/>
</dbReference>
<dbReference type="Gene3D" id="3.30.420.340">
    <property type="entry name" value="UvrC, RNAse H endonuclease domain"/>
    <property type="match status" value="1"/>
</dbReference>
<dbReference type="HAMAP" id="MF_00203">
    <property type="entry name" value="UvrC"/>
    <property type="match status" value="1"/>
</dbReference>
<dbReference type="InterPro" id="IPR000305">
    <property type="entry name" value="GIY-YIG_endonuc"/>
</dbReference>
<dbReference type="InterPro" id="IPR035901">
    <property type="entry name" value="GIY-YIG_endonuc_sf"/>
</dbReference>
<dbReference type="InterPro" id="IPR047296">
    <property type="entry name" value="GIY-YIG_UvrC_Cho"/>
</dbReference>
<dbReference type="InterPro" id="IPR010994">
    <property type="entry name" value="RuvA_2-like"/>
</dbReference>
<dbReference type="InterPro" id="IPR001943">
    <property type="entry name" value="UVR_dom"/>
</dbReference>
<dbReference type="InterPro" id="IPR036876">
    <property type="entry name" value="UVR_dom_sf"/>
</dbReference>
<dbReference type="InterPro" id="IPR050066">
    <property type="entry name" value="UvrABC_protein_C"/>
</dbReference>
<dbReference type="InterPro" id="IPR004791">
    <property type="entry name" value="UvrC"/>
</dbReference>
<dbReference type="InterPro" id="IPR001162">
    <property type="entry name" value="UvrC_RNase_H_dom"/>
</dbReference>
<dbReference type="InterPro" id="IPR038476">
    <property type="entry name" value="UvrC_RNase_H_dom_sf"/>
</dbReference>
<dbReference type="NCBIfam" id="TIGR00194">
    <property type="entry name" value="uvrC"/>
    <property type="match status" value="1"/>
</dbReference>
<dbReference type="PANTHER" id="PTHR30562:SF1">
    <property type="entry name" value="UVRABC SYSTEM PROTEIN C"/>
    <property type="match status" value="1"/>
</dbReference>
<dbReference type="PANTHER" id="PTHR30562">
    <property type="entry name" value="UVRC/OXIDOREDUCTASE"/>
    <property type="match status" value="1"/>
</dbReference>
<dbReference type="Pfam" id="PF01541">
    <property type="entry name" value="GIY-YIG"/>
    <property type="match status" value="1"/>
</dbReference>
<dbReference type="Pfam" id="PF14520">
    <property type="entry name" value="HHH_5"/>
    <property type="match status" value="1"/>
</dbReference>
<dbReference type="Pfam" id="PF02151">
    <property type="entry name" value="UVR"/>
    <property type="match status" value="1"/>
</dbReference>
<dbReference type="Pfam" id="PF22920">
    <property type="entry name" value="UvrC_RNaseH"/>
    <property type="match status" value="1"/>
</dbReference>
<dbReference type="Pfam" id="PF08459">
    <property type="entry name" value="UvrC_RNaseH_dom"/>
    <property type="match status" value="1"/>
</dbReference>
<dbReference type="SMART" id="SM00465">
    <property type="entry name" value="GIYc"/>
    <property type="match status" value="1"/>
</dbReference>
<dbReference type="SUPFAM" id="SSF46600">
    <property type="entry name" value="C-terminal UvrC-binding domain of UvrB"/>
    <property type="match status" value="1"/>
</dbReference>
<dbReference type="SUPFAM" id="SSF82771">
    <property type="entry name" value="GIY-YIG endonuclease"/>
    <property type="match status" value="1"/>
</dbReference>
<dbReference type="SUPFAM" id="SSF47781">
    <property type="entry name" value="RuvA domain 2-like"/>
    <property type="match status" value="1"/>
</dbReference>
<dbReference type="PROSITE" id="PS50164">
    <property type="entry name" value="GIY_YIG"/>
    <property type="match status" value="1"/>
</dbReference>
<dbReference type="PROSITE" id="PS50151">
    <property type="entry name" value="UVR"/>
    <property type="match status" value="1"/>
</dbReference>
<dbReference type="PROSITE" id="PS50165">
    <property type="entry name" value="UVRC"/>
    <property type="match status" value="1"/>
</dbReference>
<proteinExistence type="inferred from homology"/>
<reference key="1">
    <citation type="journal article" date="2007" name="Genome Biol.">
        <title>Comparison of Francisella tularensis genomes reveals evolutionary events associated with the emergence of human pathogenic strains.</title>
        <authorList>
            <person name="Rohmer L."/>
            <person name="Fong C."/>
            <person name="Abmayr S."/>
            <person name="Wasnick M."/>
            <person name="Larson Freeman T.J."/>
            <person name="Radey M."/>
            <person name="Guina T."/>
            <person name="Svensson K."/>
            <person name="Hayden H.S."/>
            <person name="Jacobs M."/>
            <person name="Gallagher L.A."/>
            <person name="Manoil C."/>
            <person name="Ernst R.K."/>
            <person name="Drees B."/>
            <person name="Buckley D."/>
            <person name="Haugen E."/>
            <person name="Bovee D."/>
            <person name="Zhou Y."/>
            <person name="Chang J."/>
            <person name="Levy R."/>
            <person name="Lim R."/>
            <person name="Gillett W."/>
            <person name="Guenthener D."/>
            <person name="Kang A."/>
            <person name="Shaffer S.A."/>
            <person name="Taylor G."/>
            <person name="Chen J."/>
            <person name="Gallis B."/>
            <person name="D'Argenio D.A."/>
            <person name="Forsman M."/>
            <person name="Olson M.V."/>
            <person name="Goodlett D.R."/>
            <person name="Kaul R."/>
            <person name="Miller S.I."/>
            <person name="Brittnacher M.J."/>
        </authorList>
    </citation>
    <scope>NUCLEOTIDE SEQUENCE [LARGE SCALE GENOMIC DNA]</scope>
    <source>
        <strain>U112</strain>
    </source>
</reference>
<evidence type="ECO:0000255" key="1">
    <source>
        <dbReference type="HAMAP-Rule" id="MF_00203"/>
    </source>
</evidence>
<protein>
    <recommendedName>
        <fullName evidence="1">UvrABC system protein C</fullName>
        <shortName evidence="1">Protein UvrC</shortName>
    </recommendedName>
    <alternativeName>
        <fullName evidence="1">Excinuclease ABC subunit C</fullName>
    </alternativeName>
</protein>
<name>UVRC_FRATN</name>
<accession>A0Q5Q7</accession>